<reference evidence="12 13" key="1">
    <citation type="journal article" date="2001" name="J. Bacteriol.">
        <title>Genome of the bacterium Streptococcus pneumoniae strain R6.</title>
        <authorList>
            <person name="Hoskins J."/>
            <person name="Alborn W.E. Jr."/>
            <person name="Arnold J."/>
            <person name="Blaszczak L.C."/>
            <person name="Burgett S."/>
            <person name="DeHoff B.S."/>
            <person name="Estrem S.T."/>
            <person name="Fritz L."/>
            <person name="Fu D.-J."/>
            <person name="Fuller W."/>
            <person name="Geringer C."/>
            <person name="Gilmour R."/>
            <person name="Glass J.S."/>
            <person name="Khoja H."/>
            <person name="Kraft A.R."/>
            <person name="Lagace R.E."/>
            <person name="LeBlanc D.J."/>
            <person name="Lee L.N."/>
            <person name="Lefkowitz E.J."/>
            <person name="Lu J."/>
            <person name="Matsushima P."/>
            <person name="McAhren S.M."/>
            <person name="McHenney M."/>
            <person name="McLeaster K."/>
            <person name="Mundy C.W."/>
            <person name="Nicas T.I."/>
            <person name="Norris F.H."/>
            <person name="O'Gara M."/>
            <person name="Peery R.B."/>
            <person name="Robertson G.T."/>
            <person name="Rockey P."/>
            <person name="Sun P.-M."/>
            <person name="Winkler M.E."/>
            <person name="Yang Y."/>
            <person name="Young-Bellido M."/>
            <person name="Zhao G."/>
            <person name="Zook C.A."/>
            <person name="Baltz R.H."/>
            <person name="Jaskunas S.R."/>
            <person name="Rosteck P.R. Jr."/>
            <person name="Skatrud P.L."/>
            <person name="Glass J.I."/>
        </authorList>
    </citation>
    <scope>NUCLEOTIDE SEQUENCE [LARGE SCALE GENOMIC DNA]</scope>
    <source>
        <strain evidence="13">ATCC BAA-255 / R6</strain>
    </source>
</reference>
<reference evidence="11" key="2">
    <citation type="journal article" date="2013" name="PLoS Pathog.">
        <title>A type IV pilus mediates DNA binding during natural transformation in Streptococcus pneumoniae.</title>
        <authorList>
            <person name="Laurenceau R."/>
            <person name="Pehau-Arnaudet G."/>
            <person name="Baconnais S."/>
            <person name="Gault J."/>
            <person name="Malosse C."/>
            <person name="Dujeancourt A."/>
            <person name="Campo N."/>
            <person name="Chamot-Rooke J."/>
            <person name="Le Cam E."/>
            <person name="Claverys J.P."/>
            <person name="Fronzes R."/>
        </authorList>
    </citation>
    <scope>FUNCTION</scope>
    <scope>SUBUNIT</scope>
    <scope>SUBCELLULAR LOCATION</scope>
    <scope>INDUCTION</scope>
    <scope>MASS SPECTROMETRY</scope>
    <scope>METHYLATION AT PHE-16</scope>
    <scope>MUTAGENESIS OF GLU-20</scope>
    <source>
        <strain>G54</strain>
        <strain evidence="11">TCP1251</strain>
    </source>
</reference>
<reference key="3">
    <citation type="journal article" date="2017" name="J. Biol. Chem.">
        <title>Structure of the competence pilus major pilin ComGC in Streptococcus pneumoniae.</title>
        <authorList>
            <person name="Muschiol S."/>
            <person name="Erlendsson S."/>
            <person name="Aschtgen M.S."/>
            <person name="Oliveira V."/>
            <person name="Schmieder P."/>
            <person name="de Lichtenberg C."/>
            <person name="Teilum K."/>
            <person name="Boesen T."/>
            <person name="Akbey U."/>
            <person name="Henriques-Normark B."/>
        </authorList>
    </citation>
    <scope>FUNCTION</scope>
    <scope>SUBUNIT</scope>
    <scope>SUBCELLULAR LOCATION</scope>
    <scope>PROTEOLYTIC CLEAVAGE</scope>
</reference>
<reference key="4">
    <citation type="journal article" date="2021" name="Front. Cell. Infect. Microbiol.">
        <title>The Role of Minor Pilins in Assembly and Function of the Competence Pilus of Streptococcus pneumoniae.</title>
        <authorList>
            <person name="Oliveira V."/>
            <person name="Aschtgen M.S."/>
            <person name="van Erp A."/>
            <person name="Henriques-Normark B."/>
            <person name="Muschiol S."/>
        </authorList>
    </citation>
    <scope>FUNCTION</scope>
    <scope>INTERACTION WITH COMGG</scope>
    <scope>SUBCELLULAR LOCATION</scope>
    <scope>DISRUPTION PHENOTYPE</scope>
    <scope>MUTAGENESIS OF GLU-20</scope>
</reference>
<reference key="5">
    <citation type="journal article" date="2021" name="Mol. Microbiol.">
        <title>Competence pili in Streptococcus pneumoniae are highly dynamic structures that retract to promote DNA uptake.</title>
        <authorList>
            <person name="Lam T."/>
            <person name="Ellison C.K."/>
            <person name="Eddington D.T."/>
            <person name="Brun Y.V."/>
            <person name="Dalia A.B."/>
            <person name="Morrison D.A."/>
        </authorList>
    </citation>
    <scope>FUNCTION</scope>
    <scope>MUTAGENESIS OF SER-29; THR-40; SER-60; SER-66; SER-74; ALA-80; THR-85; ASN-107 AND ASP-108</scope>
    <source>
        <strain evidence="11">CP2137</strain>
    </source>
</reference>
<reference evidence="14" key="6">
    <citation type="journal article" date="2020" name="J. Biol. Chem.">
        <title>The major subunit of widespread competence pili exhibits a novel and conserved type IV pilin fold.</title>
        <authorList>
            <person name="Sheppard D."/>
            <person name="Berry J.L."/>
            <person name="Denise R."/>
            <person name="Rocha E.P.C."/>
            <person name="Matthews S."/>
            <person name="Pelicic V."/>
        </authorList>
    </citation>
    <scope>STRUCTURE BY NMR OF 38-108</scope>
</reference>
<organism evidence="12 13">
    <name type="scientific">Streptococcus pneumoniae (strain ATCC BAA-255 / R6)</name>
    <dbReference type="NCBI Taxonomy" id="171101"/>
    <lineage>
        <taxon>Bacteria</taxon>
        <taxon>Bacillati</taxon>
        <taxon>Bacillota</taxon>
        <taxon>Bacilli</taxon>
        <taxon>Lactobacillales</taxon>
        <taxon>Streptococcaceae</taxon>
        <taxon>Streptococcus</taxon>
    </lineage>
</organism>
<protein>
    <recommendedName>
        <fullName evidence="8">Competence protein ComGC</fullName>
    </recommendedName>
    <alternativeName>
        <fullName evidence="10">Major pilin ComGC</fullName>
    </alternativeName>
</protein>
<keyword id="KW-0002">3D-structure</keyword>
<keyword id="KW-1003">Cell membrane</keyword>
<keyword id="KW-0178">Competence</keyword>
<keyword id="KW-0281">Fimbrium</keyword>
<keyword id="KW-0472">Membrane</keyword>
<keyword id="KW-0488">Methylation</keyword>
<keyword id="KW-1185">Reference proteome</keyword>
<keyword id="KW-0964">Secreted</keyword>
<keyword id="KW-0732">Signal</keyword>
<keyword id="KW-0812">Transmembrane</keyword>
<keyword id="KW-1133">Transmembrane helix</keyword>
<proteinExistence type="evidence at protein level"/>
<name>COMGC_STRR6</name>
<accession>Q8DN88</accession>
<gene>
    <name evidence="9" type="primary">comGC</name>
    <name evidence="12" type="synonym">cglC</name>
    <name evidence="12" type="ordered locus">spr1862</name>
</gene>
<evidence type="ECO:0000250" key="1">
    <source>
        <dbReference type="UniProtKB" id="A0A0H2URU9"/>
    </source>
</evidence>
<evidence type="ECO:0000250" key="2">
    <source>
        <dbReference type="UniProtKB" id="P25955"/>
    </source>
</evidence>
<evidence type="ECO:0000255" key="3"/>
<evidence type="ECO:0000269" key="4">
    <source>
    </source>
</evidence>
<evidence type="ECO:0000269" key="5">
    <source>
    </source>
</evidence>
<evidence type="ECO:0000269" key="6">
    <source>
    </source>
</evidence>
<evidence type="ECO:0000269" key="7">
    <source>
    </source>
</evidence>
<evidence type="ECO:0000303" key="8">
    <source>
    </source>
</evidence>
<evidence type="ECO:0000303" key="9">
    <source>
    </source>
</evidence>
<evidence type="ECO:0000303" key="10">
    <source>
    </source>
</evidence>
<evidence type="ECO:0000305" key="11"/>
<evidence type="ECO:0000312" key="12">
    <source>
        <dbReference type="EMBL" id="AAL00664.1"/>
    </source>
</evidence>
<evidence type="ECO:0000312" key="13">
    <source>
        <dbReference type="Proteomes" id="UP000000586"/>
    </source>
</evidence>
<evidence type="ECO:0007744" key="14">
    <source>
        <dbReference type="PDB" id="6Y1H"/>
    </source>
</evidence>
<evidence type="ECO:0007829" key="15">
    <source>
        <dbReference type="PDB" id="6Y1H"/>
    </source>
</evidence>
<comment type="function">
    <text evidence="2 4 5 6 7">Major component of the type IV-like pilus (T4P) that plays a role in transformation (PubMed:23825953, PubMed:28659339, PubMed:35004361). Transformation pili are dynamically extended and retracted, perhaps thereby promoting DNA uptake and transformation (PubMed:23825953, PubMed:33754381). Required for transformation (PubMed:23825953, PubMed:28659339, PubMed:33754381, PubMed:35004361). Required for DNA binding (By similarity).</text>
</comment>
<comment type="subunit">
    <text evidence="4 5 7">The transformation pili are flexible filaments, consisting mainly of the major pilin ComGC and smaller amounts of the minor pilins, including at least ComGD, ComGF and ComGG, and perhaps ComGE (PubMed:23825953, PubMed:28659339). Homodimer (PubMed:28659339). Forms higher-order multimers (PubMed:28659339). Interacts with ComGG; the interaction is probably direct (PubMed:35004361).</text>
</comment>
<comment type="subcellular location">
    <subcellularLocation>
        <location evidence="2">Cell membrane</location>
        <topology evidence="2">Single-pass membrane protein</topology>
    </subcellularLocation>
    <subcellularLocation>
        <location evidence="2">Cell surface</location>
    </subcellularLocation>
    <subcellularLocation>
        <location evidence="4 5 7">Fimbrium</location>
    </subcellularLocation>
    <subcellularLocation>
        <location evidence="1">Secreted</location>
    </subcellularLocation>
    <text evidence="1 2">The unprocessed form is an integral membrane protein with its C-terminus outside the membrane. Upon cleavage, it is translocated to the outer face of the membrane (By similarity). ComGC release into culture supernatant is probably physiological because it is still observed in an autolysis-deficient lytA mutant background (By similarity).</text>
</comment>
<comment type="induction">
    <text evidence="4">Up-regulated by competence-stimulating peptide (CSP) (PubMed:23825953). Part of the putative comGA-comGB-comGC-comGD-comGE-comGF-comGG operon (PubMed:23825953).</text>
</comment>
<comment type="PTM">
    <text evidence="5">Undergoes proteolytic cleavage.</text>
</comment>
<comment type="mass spectrometry" mass="10442.0" method="Electrospray" evidence="4"/>
<comment type="disruption phenotype">
    <text evidence="7">ComGD, ComGF and ComGG are undetectable.</text>
</comment>
<comment type="similarity">
    <text evidence="11">Belongs to the ComGC family.</text>
</comment>
<feature type="signal peptide" evidence="3">
    <location>
        <begin position="1"/>
        <end position="13"/>
    </location>
</feature>
<feature type="chain" id="PRO_0000459377" description="Competence protein ComGC">
    <location>
        <begin position="14"/>
        <end position="108"/>
    </location>
</feature>
<feature type="transmembrane region" description="Helical" evidence="3">
    <location>
        <begin position="16"/>
        <end position="36"/>
    </location>
</feature>
<feature type="region of interest" description="May be involved in polymerization of ComGC" evidence="1">
    <location>
        <begin position="14"/>
        <end position="39"/>
    </location>
</feature>
<feature type="modified residue" description="N-methylphenylalanine" evidence="4">
    <location>
        <position position="16"/>
    </location>
</feature>
<feature type="mutagenesis site" description="Despite normal expression level in cells, abolishes detection of ComGC in the mechanically-sheared fraction, probably corresponding to the pilus. Abolishes transformation." evidence="4 7">
    <original>E</original>
    <variation>A</variation>
    <variation>V</variation>
    <location>
        <position position="20"/>
    </location>
</feature>
<feature type="mutagenesis site" description="Detectable but reduced rate of transformation." evidence="6">
    <original>S</original>
    <variation>C</variation>
    <location>
        <position position="29"/>
    </location>
</feature>
<feature type="mutagenesis site" description="Detectable but reduced rate of transformation." evidence="6">
    <original>T</original>
    <variation>C</variation>
    <location>
        <position position="40"/>
    </location>
</feature>
<feature type="mutagenesis site" description="Normal rate of transformation." evidence="6">
    <original>S</original>
    <variation>C</variation>
    <location>
        <position position="60"/>
    </location>
</feature>
<feature type="mutagenesis site" description="Normal rate of transformation." evidence="6">
    <original>S</original>
    <variation>C</variation>
    <location>
        <position position="66"/>
    </location>
</feature>
<feature type="mutagenesis site" description="Normal rate of transformation." evidence="6">
    <original>S</original>
    <variation>C</variation>
    <location>
        <position position="74"/>
    </location>
</feature>
<feature type="mutagenesis site" description="Detectable but reduced rate of transformation." evidence="6">
    <original>A</original>
    <variation>C</variation>
    <location>
        <position position="80"/>
    </location>
</feature>
<feature type="mutagenesis site" description="Detectable but reduced rate of transformation." evidence="6">
    <original>T</original>
    <variation>C</variation>
    <location>
        <position position="85"/>
    </location>
</feature>
<feature type="mutagenesis site" description="Detectable but reduced rate of transformation." evidence="6">
    <original>N</original>
    <variation>C</variation>
    <location>
        <position position="107"/>
    </location>
</feature>
<feature type="mutagenesis site" description="Detectable but reduced rate of transformation." evidence="6">
    <original>D</original>
    <variation>C</variation>
    <location>
        <position position="108"/>
    </location>
</feature>
<feature type="helix" evidence="15">
    <location>
        <begin position="51"/>
        <end position="67"/>
    </location>
</feature>
<feature type="strand" evidence="15">
    <location>
        <begin position="70"/>
        <end position="72"/>
    </location>
</feature>
<feature type="helix" evidence="15">
    <location>
        <begin position="75"/>
        <end position="81"/>
    </location>
</feature>
<feature type="helix" evidence="15">
    <location>
        <begin position="86"/>
        <end position="95"/>
    </location>
</feature>
<dbReference type="EMBL" id="AE007317">
    <property type="protein sequence ID" value="AAL00664.1"/>
    <property type="molecule type" value="Genomic_DNA"/>
</dbReference>
<dbReference type="PIR" id="C98104">
    <property type="entry name" value="C98104"/>
</dbReference>
<dbReference type="RefSeq" id="NP_359453.1">
    <property type="nucleotide sequence ID" value="NC_003098.1"/>
</dbReference>
<dbReference type="RefSeq" id="WP_000738626.1">
    <property type="nucleotide sequence ID" value="NC_003098.1"/>
</dbReference>
<dbReference type="PDB" id="6Y1H">
    <property type="method" value="NMR"/>
    <property type="chains" value="A=38-108"/>
</dbReference>
<dbReference type="PDBsum" id="6Y1H"/>
<dbReference type="BMRB" id="Q8DN88"/>
<dbReference type="SMR" id="Q8DN88"/>
<dbReference type="STRING" id="171101.spr1862"/>
<dbReference type="iPTMnet" id="Q8DN88"/>
<dbReference type="KEGG" id="spr:spr1862"/>
<dbReference type="PATRIC" id="fig|171101.6.peg.2009"/>
<dbReference type="eggNOG" id="COG4537">
    <property type="taxonomic scope" value="Bacteria"/>
</dbReference>
<dbReference type="HOGENOM" id="CLU_091705_9_1_9"/>
<dbReference type="Proteomes" id="UP000000586">
    <property type="component" value="Chromosome"/>
</dbReference>
<dbReference type="GO" id="GO:0009986">
    <property type="term" value="C:cell surface"/>
    <property type="evidence" value="ECO:0007669"/>
    <property type="project" value="UniProtKB-SubCell"/>
</dbReference>
<dbReference type="GO" id="GO:0005576">
    <property type="term" value="C:extracellular region"/>
    <property type="evidence" value="ECO:0007669"/>
    <property type="project" value="UniProtKB-SubCell"/>
</dbReference>
<dbReference type="GO" id="GO:0009289">
    <property type="term" value="C:pilus"/>
    <property type="evidence" value="ECO:0007669"/>
    <property type="project" value="UniProtKB-SubCell"/>
</dbReference>
<dbReference type="GO" id="GO:0005886">
    <property type="term" value="C:plasma membrane"/>
    <property type="evidence" value="ECO:0007669"/>
    <property type="project" value="UniProtKB-SubCell"/>
</dbReference>
<dbReference type="GO" id="GO:0015627">
    <property type="term" value="C:type II protein secretion system complex"/>
    <property type="evidence" value="ECO:0007669"/>
    <property type="project" value="InterPro"/>
</dbReference>
<dbReference type="GO" id="GO:0030420">
    <property type="term" value="P:establishment of competence for transformation"/>
    <property type="evidence" value="ECO:0007669"/>
    <property type="project" value="UniProtKB-KW"/>
</dbReference>
<dbReference type="GO" id="GO:0015628">
    <property type="term" value="P:protein secretion by the type II secretion system"/>
    <property type="evidence" value="ECO:0007669"/>
    <property type="project" value="InterPro"/>
</dbReference>
<dbReference type="Gene3D" id="3.30.700.10">
    <property type="entry name" value="Glycoprotein, Type 4 Pilin"/>
    <property type="match status" value="1"/>
</dbReference>
<dbReference type="InterPro" id="IPR000983">
    <property type="entry name" value="Bac_GSPG_pilin"/>
</dbReference>
<dbReference type="InterPro" id="IPR016940">
    <property type="entry name" value="ComGC"/>
</dbReference>
<dbReference type="InterPro" id="IPR012902">
    <property type="entry name" value="N_methyl_site"/>
</dbReference>
<dbReference type="InterPro" id="IPR045584">
    <property type="entry name" value="Pilin-like"/>
</dbReference>
<dbReference type="NCBIfam" id="TIGR02532">
    <property type="entry name" value="IV_pilin_GFxxxE"/>
    <property type="match status" value="1"/>
</dbReference>
<dbReference type="NCBIfam" id="NF040999">
    <property type="entry name" value="pilin_ComGC"/>
    <property type="match status" value="1"/>
</dbReference>
<dbReference type="Pfam" id="PF07963">
    <property type="entry name" value="N_methyl"/>
    <property type="match status" value="1"/>
</dbReference>
<dbReference type="PIRSF" id="PIRSF029928">
    <property type="entry name" value="Late_competence_ComGC"/>
    <property type="match status" value="1"/>
</dbReference>
<dbReference type="PRINTS" id="PR00813">
    <property type="entry name" value="BCTERIALGSPG"/>
</dbReference>
<dbReference type="SUPFAM" id="SSF54523">
    <property type="entry name" value="Pili subunits"/>
    <property type="match status" value="1"/>
</dbReference>
<sequence length="108" mass="12200">MKKMMTFLKKAKVKAFTLVEMLVVLLIISVLFLLFVPNLTKQKEAVNDKGKAAVVKVVESQAELYSLEKNEDASLRKLQADGRITEEQAKAYKEYHDKNGGANRKVND</sequence>